<feature type="chain" id="PRO_0000234453" description="Protein TusC">
    <location>
        <begin position="1"/>
        <end position="119"/>
    </location>
</feature>
<reference key="1">
    <citation type="journal article" date="2003" name="Nat. Biotechnol.">
        <title>The genome sequence of the entomopathogenic bacterium Photorhabdus luminescens.</title>
        <authorList>
            <person name="Duchaud E."/>
            <person name="Rusniok C."/>
            <person name="Frangeul L."/>
            <person name="Buchrieser C."/>
            <person name="Givaudan A."/>
            <person name="Taourit S."/>
            <person name="Bocs S."/>
            <person name="Boursaux-Eude C."/>
            <person name="Chandler M."/>
            <person name="Charles J.-F."/>
            <person name="Dassa E."/>
            <person name="Derose R."/>
            <person name="Derzelle S."/>
            <person name="Freyssinet G."/>
            <person name="Gaudriault S."/>
            <person name="Medigue C."/>
            <person name="Lanois A."/>
            <person name="Powell K."/>
            <person name="Siguier P."/>
            <person name="Vincent R."/>
            <person name="Wingate V."/>
            <person name="Zouine M."/>
            <person name="Glaser P."/>
            <person name="Boemare N."/>
            <person name="Danchin A."/>
            <person name="Kunst F."/>
        </authorList>
    </citation>
    <scope>NUCLEOTIDE SEQUENCE [LARGE SCALE GENOMIC DNA]</scope>
    <source>
        <strain>DSM 15139 / CIP 105565 / TT01</strain>
    </source>
</reference>
<protein>
    <recommendedName>
        <fullName evidence="1">Protein TusC</fullName>
    </recommendedName>
    <alternativeName>
        <fullName evidence="1">tRNA 2-thiouridine synthesizing protein C</fullName>
    </alternativeName>
</protein>
<organism>
    <name type="scientific">Photorhabdus laumondii subsp. laumondii (strain DSM 15139 / CIP 105565 / TT01)</name>
    <name type="common">Photorhabdus luminescens subsp. laumondii</name>
    <dbReference type="NCBI Taxonomy" id="243265"/>
    <lineage>
        <taxon>Bacteria</taxon>
        <taxon>Pseudomonadati</taxon>
        <taxon>Pseudomonadota</taxon>
        <taxon>Gammaproteobacteria</taxon>
        <taxon>Enterobacterales</taxon>
        <taxon>Morganellaceae</taxon>
        <taxon>Photorhabdus</taxon>
    </lineage>
</organism>
<comment type="function">
    <text evidence="1">Part of a sulfur-relay system required for 2-thiolation of 5-methylaminomethyl-2-thiouridine (mnm(5)s(2)U) at tRNA wobble positions.</text>
</comment>
<comment type="subunit">
    <text evidence="1">Heterohexamer, formed by a dimer of trimers. The hexameric TusBCD complex contains 2 copies each of TusB, TusC and TusD. The TusBCD complex interacts with TusE.</text>
</comment>
<comment type="subcellular location">
    <subcellularLocation>
        <location evidence="1">Cytoplasm</location>
    </subcellularLocation>
</comment>
<comment type="similarity">
    <text evidence="1">Belongs to the DsrF/TusC family.</text>
</comment>
<sequence length="119" mass="13303">MKKIAFIFTKTPHGDAGGREGLDALLATSALTEKVGVFFISDGVLQLLPNQQPDRILARNYIATFKVLPLYDIEECYLCQEDLVMRGLSSVNHFVLDAKVIPAETIREKLVDYDVVLTF</sequence>
<keyword id="KW-0963">Cytoplasm</keyword>
<keyword id="KW-1185">Reference proteome</keyword>
<keyword id="KW-0819">tRNA processing</keyword>
<gene>
    <name evidence="1" type="primary">tusC</name>
    <name type="ordered locus">plu0427</name>
</gene>
<accession>Q7N9B6</accession>
<proteinExistence type="inferred from homology"/>
<dbReference type="EMBL" id="BX571860">
    <property type="protein sequence ID" value="CAE12722.1"/>
    <property type="molecule type" value="Genomic_DNA"/>
</dbReference>
<dbReference type="RefSeq" id="WP_011144813.1">
    <property type="nucleotide sequence ID" value="NC_005126.1"/>
</dbReference>
<dbReference type="SMR" id="Q7N9B6"/>
<dbReference type="STRING" id="243265.plu0427"/>
<dbReference type="GeneID" id="48846713"/>
<dbReference type="KEGG" id="plu:plu0427"/>
<dbReference type="eggNOG" id="COG2923">
    <property type="taxonomic scope" value="Bacteria"/>
</dbReference>
<dbReference type="HOGENOM" id="CLU_155943_1_0_6"/>
<dbReference type="OrthoDB" id="9789418at2"/>
<dbReference type="Proteomes" id="UP000002514">
    <property type="component" value="Chromosome"/>
</dbReference>
<dbReference type="GO" id="GO:0005737">
    <property type="term" value="C:cytoplasm"/>
    <property type="evidence" value="ECO:0007669"/>
    <property type="project" value="UniProtKB-SubCell"/>
</dbReference>
<dbReference type="GO" id="GO:0008033">
    <property type="term" value="P:tRNA processing"/>
    <property type="evidence" value="ECO:0007669"/>
    <property type="project" value="UniProtKB-UniRule"/>
</dbReference>
<dbReference type="Gene3D" id="3.40.1260.10">
    <property type="entry name" value="DsrEFH-like"/>
    <property type="match status" value="1"/>
</dbReference>
<dbReference type="HAMAP" id="MF_00389">
    <property type="entry name" value="Thiourid_synth_C"/>
    <property type="match status" value="1"/>
</dbReference>
<dbReference type="InterPro" id="IPR027396">
    <property type="entry name" value="DsrEFH-like"/>
</dbReference>
<dbReference type="InterPro" id="IPR003787">
    <property type="entry name" value="Sulphur_relay_DsrE/F-like"/>
</dbReference>
<dbReference type="InterPro" id="IPR037450">
    <property type="entry name" value="Sulphur_relay_TusC"/>
</dbReference>
<dbReference type="InterPro" id="IPR017462">
    <property type="entry name" value="Sulphur_relay_TusC/DsrF"/>
</dbReference>
<dbReference type="NCBIfam" id="NF001238">
    <property type="entry name" value="PRK00211.1"/>
    <property type="match status" value="1"/>
</dbReference>
<dbReference type="NCBIfam" id="TIGR03010">
    <property type="entry name" value="sulf_tusC_dsrF"/>
    <property type="match status" value="1"/>
</dbReference>
<dbReference type="PANTHER" id="PTHR38780">
    <property type="entry name" value="PROTEIN TUSC"/>
    <property type="match status" value="1"/>
</dbReference>
<dbReference type="PANTHER" id="PTHR38780:SF1">
    <property type="entry name" value="PROTEIN TUSC"/>
    <property type="match status" value="1"/>
</dbReference>
<dbReference type="Pfam" id="PF02635">
    <property type="entry name" value="DsrE"/>
    <property type="match status" value="1"/>
</dbReference>
<dbReference type="SUPFAM" id="SSF75169">
    <property type="entry name" value="DsrEFH-like"/>
    <property type="match status" value="1"/>
</dbReference>
<evidence type="ECO:0000255" key="1">
    <source>
        <dbReference type="HAMAP-Rule" id="MF_00389"/>
    </source>
</evidence>
<name>TUSC_PHOLL</name>